<keyword id="KW-0150">Chloroplast</keyword>
<keyword id="KW-0472">Membrane</keyword>
<keyword id="KW-0934">Plastid</keyword>
<keyword id="KW-1185">Reference proteome</keyword>
<keyword id="KW-0793">Thylakoid</keyword>
<keyword id="KW-0812">Transmembrane</keyword>
<keyword id="KW-1133">Transmembrane helix</keyword>
<accession>Q2MI73</accession>
<reference key="1">
    <citation type="journal article" date="2006" name="Theor. Appl. Genet.">
        <title>Complete chloroplast genome sequences of Solanum bulbocastanum, Solanum lycopersicum and comparative analyses with other Solanaceae genomes.</title>
        <authorList>
            <person name="Daniell H."/>
            <person name="Lee S.-B."/>
            <person name="Grevich J."/>
            <person name="Saski C."/>
            <person name="Quesada-Vargas T."/>
            <person name="Guda C."/>
            <person name="Tomkins J."/>
            <person name="Jansen R.K."/>
        </authorList>
    </citation>
    <scope>NUCLEOTIDE SEQUENCE [LARGE SCALE GENOMIC DNA]</scope>
    <source>
        <strain>cv. LA3023</strain>
    </source>
</reference>
<reference key="2">
    <citation type="journal article" date="2006" name="J. Mol. Evol.">
        <title>Sequence of the tomato chloroplast DNA and evolutionary comparison of solanaceous plastid genomes.</title>
        <authorList>
            <person name="Kahlau S."/>
            <person name="Aspinall S."/>
            <person name="Gray J.C."/>
            <person name="Bock R."/>
        </authorList>
    </citation>
    <scope>NUCLEOTIDE SEQUENCE [LARGE SCALE GENOMIC DNA]</scope>
    <source>
        <strain>cv. IPA-6</strain>
    </source>
</reference>
<protein>
    <recommendedName>
        <fullName evidence="1">Protein PsbN</fullName>
    </recommendedName>
</protein>
<evidence type="ECO:0000255" key="1">
    <source>
        <dbReference type="HAMAP-Rule" id="MF_00293"/>
    </source>
</evidence>
<proteinExistence type="inferred from homology"/>
<gene>
    <name evidence="1" type="primary">psbN</name>
</gene>
<comment type="function">
    <text evidence="1">May play a role in photosystem I and II biogenesis.</text>
</comment>
<comment type="subcellular location">
    <subcellularLocation>
        <location evidence="1">Plastid</location>
        <location evidence="1">Chloroplast thylakoid membrane</location>
        <topology evidence="1">Single-pass membrane protein</topology>
    </subcellularLocation>
</comment>
<comment type="similarity">
    <text evidence="1">Belongs to the PsbN family.</text>
</comment>
<comment type="caution">
    <text evidence="1">Originally thought to be a component of PSII; based on experiments in Synechocystis, N.tabacum and barley, and its absence from PSII in T.elongatus and T.vulcanus, this is probably not true.</text>
</comment>
<organism>
    <name type="scientific">Solanum lycopersicum</name>
    <name type="common">Tomato</name>
    <name type="synonym">Lycopersicon esculentum</name>
    <dbReference type="NCBI Taxonomy" id="4081"/>
    <lineage>
        <taxon>Eukaryota</taxon>
        <taxon>Viridiplantae</taxon>
        <taxon>Streptophyta</taxon>
        <taxon>Embryophyta</taxon>
        <taxon>Tracheophyta</taxon>
        <taxon>Spermatophyta</taxon>
        <taxon>Magnoliopsida</taxon>
        <taxon>eudicotyledons</taxon>
        <taxon>Gunneridae</taxon>
        <taxon>Pentapetalae</taxon>
        <taxon>asterids</taxon>
        <taxon>lamiids</taxon>
        <taxon>Solanales</taxon>
        <taxon>Solanaceae</taxon>
        <taxon>Solanoideae</taxon>
        <taxon>Solaneae</taxon>
        <taxon>Solanum</taxon>
        <taxon>Solanum subgen. Lycopersicon</taxon>
    </lineage>
</organism>
<feature type="chain" id="PRO_0000232774" description="Protein PsbN">
    <location>
        <begin position="1"/>
        <end position="43"/>
    </location>
</feature>
<feature type="transmembrane region" description="Helical" evidence="1">
    <location>
        <begin position="7"/>
        <end position="27"/>
    </location>
</feature>
<name>PSBN_SOLLC</name>
<dbReference type="EMBL" id="DQ347959">
    <property type="protein sequence ID" value="ABC56327.1"/>
    <property type="molecule type" value="Genomic_DNA"/>
</dbReference>
<dbReference type="EMBL" id="AM087200">
    <property type="protein sequence ID" value="CAJ32422.1"/>
    <property type="molecule type" value="Genomic_DNA"/>
</dbReference>
<dbReference type="RefSeq" id="AP_004956.1">
    <property type="nucleotide sequence ID" value="AC_000188.1"/>
</dbReference>
<dbReference type="RefSeq" id="YP_008563116.1">
    <property type="nucleotide sequence ID" value="NC_007898.3"/>
</dbReference>
<dbReference type="SMR" id="Q2MI73"/>
<dbReference type="FunCoup" id="Q2MI73">
    <property type="interactions" value="43"/>
</dbReference>
<dbReference type="STRING" id="4081.Q2MI73"/>
<dbReference type="PaxDb" id="4081-Solyc01g007510.1.1"/>
<dbReference type="GeneID" id="3950393"/>
<dbReference type="KEGG" id="sly:3950393"/>
<dbReference type="InParanoid" id="Q2MI73"/>
<dbReference type="OrthoDB" id="1860403at2759"/>
<dbReference type="Proteomes" id="UP000004994">
    <property type="component" value="Chloroplast"/>
</dbReference>
<dbReference type="GO" id="GO:0009535">
    <property type="term" value="C:chloroplast thylakoid membrane"/>
    <property type="evidence" value="ECO:0007669"/>
    <property type="project" value="UniProtKB-SubCell"/>
</dbReference>
<dbReference type="GO" id="GO:0015979">
    <property type="term" value="P:photosynthesis"/>
    <property type="evidence" value="ECO:0007669"/>
    <property type="project" value="InterPro"/>
</dbReference>
<dbReference type="HAMAP" id="MF_00293">
    <property type="entry name" value="PSII_PsbN"/>
    <property type="match status" value="1"/>
</dbReference>
<dbReference type="InterPro" id="IPR003398">
    <property type="entry name" value="PSII_PsbN"/>
</dbReference>
<dbReference type="PANTHER" id="PTHR35326">
    <property type="entry name" value="PROTEIN PSBN"/>
    <property type="match status" value="1"/>
</dbReference>
<dbReference type="PANTHER" id="PTHR35326:SF3">
    <property type="entry name" value="PROTEIN PSBN"/>
    <property type="match status" value="1"/>
</dbReference>
<dbReference type="Pfam" id="PF02468">
    <property type="entry name" value="PsbN"/>
    <property type="match status" value="1"/>
</dbReference>
<sequence length="43" mass="4722">METATLVAIFISGLLVSFTGYALYTAFGQPSQQLRDPFEEHGD</sequence>
<geneLocation type="chloroplast"/>